<comment type="function">
    <text evidence="1">Catalytic subunit of DNA primase, an RNA polymerase that catalyzes the synthesis of short RNA molecules used as primers for DNA polymerase during DNA replication. The small subunit contains the primase catalytic core and has DNA synthesis activity on its own. Binding to the large subunit stabilizes and modulates the activity, increasing the rate of DNA synthesis while decreasing the length of the DNA fragments, and conferring RNA synthesis capability. The DNA polymerase activity may enable DNA primase to also catalyze primer extension after primer synthesis. May also play a role in DNA repair.</text>
</comment>
<comment type="cofactor">
    <cofactor evidence="1">
        <name>Mg(2+)</name>
        <dbReference type="ChEBI" id="CHEBI:18420"/>
    </cofactor>
    <cofactor evidence="1">
        <name>Mn(2+)</name>
        <dbReference type="ChEBI" id="CHEBI:29035"/>
    </cofactor>
</comment>
<comment type="subunit">
    <text evidence="1">Heterodimer of a small subunit (PriS) and a large subunit (PriL).</text>
</comment>
<comment type="similarity">
    <text evidence="1">Belongs to the eukaryotic-type primase small subunit family.</text>
</comment>
<organism>
    <name type="scientific">Methanosarcina mazei (strain ATCC BAA-159 / DSM 3647 / Goe1 / Go1 / JCM 11833 / OCM 88)</name>
    <name type="common">Methanosarcina frisia</name>
    <dbReference type="NCBI Taxonomy" id="192952"/>
    <lineage>
        <taxon>Archaea</taxon>
        <taxon>Methanobacteriati</taxon>
        <taxon>Methanobacteriota</taxon>
        <taxon>Stenosarchaea group</taxon>
        <taxon>Methanomicrobia</taxon>
        <taxon>Methanosarcinales</taxon>
        <taxon>Methanosarcinaceae</taxon>
        <taxon>Methanosarcina</taxon>
    </lineage>
</organism>
<name>PRIS_METMA</name>
<accession>Q8PVZ4</accession>
<gene>
    <name evidence="1" type="primary">priS</name>
    <name type="synonym">priA</name>
    <name type="ordered locus">MM_1811</name>
</gene>
<evidence type="ECO:0000255" key="1">
    <source>
        <dbReference type="HAMAP-Rule" id="MF_00700"/>
    </source>
</evidence>
<sequence length="414" mass="47502">MDSRTTRYLKSCFQKHYKTAEIGLPDHLPNREWAFIFYDDMPEKMMHRHKSFGSPGEALDYLYGMAPAHVYNSTAYYEYPDARKMNEKNWLGAELIFDLDADHLPNAPRNYADMLELVKKETLKLMDFLLDDFGFSEQDIELVFSGGRGYHFHITSPKVLTLGSSERREIVNYLSGRDIDFKYFFREVSMDGDFGTGSKSFKGIKNLPVKCTLVGYDSGWGKRVALYLTDYMKAECGKKYKKDMFPELRRHEKVGDTTIKKLINITNSENGLKDILERGRLDFGVRNFKEIAAYFMQESMENFLNRFGASVDEPVTADIKRLIRVPGSLHGGSGMLVKKLALCELEKFNPLNDAVVFGERPVKITVSKPFSVQLKGKDLRIEEGIQEVPEYAAVYLICRGVAEYGYRRNQPDAV</sequence>
<reference key="1">
    <citation type="journal article" date="2002" name="J. Mol. Microbiol. Biotechnol.">
        <title>The genome of Methanosarcina mazei: evidence for lateral gene transfer between Bacteria and Archaea.</title>
        <authorList>
            <person name="Deppenmeier U."/>
            <person name="Johann A."/>
            <person name="Hartsch T."/>
            <person name="Merkl R."/>
            <person name="Schmitz R.A."/>
            <person name="Martinez-Arias R."/>
            <person name="Henne A."/>
            <person name="Wiezer A."/>
            <person name="Baeumer S."/>
            <person name="Jacobi C."/>
            <person name="Brueggemann H."/>
            <person name="Lienard T."/>
            <person name="Christmann A."/>
            <person name="Boemecke M."/>
            <person name="Steckel S."/>
            <person name="Bhattacharyya A."/>
            <person name="Lykidis A."/>
            <person name="Overbeek R."/>
            <person name="Klenk H.-P."/>
            <person name="Gunsalus R.P."/>
            <person name="Fritz H.-J."/>
            <person name="Gottschalk G."/>
        </authorList>
    </citation>
    <scope>NUCLEOTIDE SEQUENCE [LARGE SCALE GENOMIC DNA]</scope>
    <source>
        <strain>ATCC BAA-159 / DSM 3647 / Goe1 / Go1 / JCM 11833 / OCM 88</strain>
    </source>
</reference>
<keyword id="KW-0235">DNA replication</keyword>
<keyword id="KW-0240">DNA-directed RNA polymerase</keyword>
<keyword id="KW-0460">Magnesium</keyword>
<keyword id="KW-0464">Manganese</keyword>
<keyword id="KW-0479">Metal-binding</keyword>
<keyword id="KW-0548">Nucleotidyltransferase</keyword>
<keyword id="KW-0639">Primosome</keyword>
<keyword id="KW-0804">Transcription</keyword>
<keyword id="KW-0808">Transferase</keyword>
<dbReference type="EC" id="2.7.7.-" evidence="1"/>
<dbReference type="EMBL" id="AE008384">
    <property type="protein sequence ID" value="AAM31507.1"/>
    <property type="molecule type" value="Genomic_DNA"/>
</dbReference>
<dbReference type="RefSeq" id="WP_011033748.1">
    <property type="nucleotide sequence ID" value="NC_003901.1"/>
</dbReference>
<dbReference type="SMR" id="Q8PVZ4"/>
<dbReference type="GeneID" id="82160868"/>
<dbReference type="KEGG" id="mma:MM_1811"/>
<dbReference type="PATRIC" id="fig|192952.21.peg.2095"/>
<dbReference type="eggNOG" id="arCOG04110">
    <property type="taxonomic scope" value="Archaea"/>
</dbReference>
<dbReference type="HOGENOM" id="CLU_056123_1_0_2"/>
<dbReference type="Proteomes" id="UP000000595">
    <property type="component" value="Chromosome"/>
</dbReference>
<dbReference type="GO" id="GO:0000428">
    <property type="term" value="C:DNA-directed RNA polymerase complex"/>
    <property type="evidence" value="ECO:0007669"/>
    <property type="project" value="UniProtKB-KW"/>
</dbReference>
<dbReference type="GO" id="GO:1990077">
    <property type="term" value="C:primosome complex"/>
    <property type="evidence" value="ECO:0007669"/>
    <property type="project" value="UniProtKB-KW"/>
</dbReference>
<dbReference type="GO" id="GO:0003899">
    <property type="term" value="F:DNA-directed RNA polymerase activity"/>
    <property type="evidence" value="ECO:0007669"/>
    <property type="project" value="InterPro"/>
</dbReference>
<dbReference type="GO" id="GO:0046872">
    <property type="term" value="F:metal ion binding"/>
    <property type="evidence" value="ECO:0007669"/>
    <property type="project" value="UniProtKB-KW"/>
</dbReference>
<dbReference type="GO" id="GO:0006269">
    <property type="term" value="P:DNA replication, synthesis of primer"/>
    <property type="evidence" value="ECO:0007669"/>
    <property type="project" value="UniProtKB-UniRule"/>
</dbReference>
<dbReference type="CDD" id="cd04860">
    <property type="entry name" value="AE_Prim_S"/>
    <property type="match status" value="1"/>
</dbReference>
<dbReference type="Gene3D" id="3.90.920.10">
    <property type="entry name" value="DNA primase, PRIM domain"/>
    <property type="match status" value="1"/>
</dbReference>
<dbReference type="HAMAP" id="MF_00700">
    <property type="entry name" value="DNA_primase_sml_arc"/>
    <property type="match status" value="1"/>
</dbReference>
<dbReference type="InterPro" id="IPR002755">
    <property type="entry name" value="DNA_primase_S"/>
</dbReference>
<dbReference type="InterPro" id="IPR014052">
    <property type="entry name" value="DNA_primase_ssu_euk/arc"/>
</dbReference>
<dbReference type="InterPro" id="IPR023639">
    <property type="entry name" value="DNA_primase_ssu_PriS"/>
</dbReference>
<dbReference type="NCBIfam" id="TIGR00335">
    <property type="entry name" value="primase_sml"/>
    <property type="match status" value="1"/>
</dbReference>
<dbReference type="PANTHER" id="PTHR10536">
    <property type="entry name" value="DNA PRIMASE SMALL SUBUNIT"/>
    <property type="match status" value="1"/>
</dbReference>
<dbReference type="Pfam" id="PF01896">
    <property type="entry name" value="DNA_primase_S"/>
    <property type="match status" value="1"/>
</dbReference>
<dbReference type="SUPFAM" id="SSF56747">
    <property type="entry name" value="Prim-pol domain"/>
    <property type="match status" value="1"/>
</dbReference>
<feature type="chain" id="PRO_0000046744" description="DNA primase small subunit PriS">
    <location>
        <begin position="1"/>
        <end position="414"/>
    </location>
</feature>
<feature type="active site" evidence="1">
    <location>
        <position position="98"/>
    </location>
</feature>
<feature type="active site" evidence="1">
    <location>
        <position position="100"/>
    </location>
</feature>
<feature type="active site" evidence="1">
    <location>
        <position position="312"/>
    </location>
</feature>
<proteinExistence type="inferred from homology"/>
<protein>
    <recommendedName>
        <fullName evidence="1">DNA primase small subunit PriS</fullName>
        <ecNumber evidence="1">2.7.7.-</ecNumber>
    </recommendedName>
</protein>